<accession>Q9DG31</accession>
<accession>Q6V9X3</accession>
<comment type="function">
    <text evidence="1">When linked to subunit A of IX/X-bp, anticoagulant protein which binds to the gamma-carboxyglutamic acid-domain regions of factors IX (F9) and factor X (F10) in the presence of calcium with a 1 to 1 stoichiometry.</text>
</comment>
<comment type="function">
    <text evidence="1">When linked to subunit A of IX-bp, anticoagulant protein which binds to the gamma-carboxyglutamic acid-domain regions of factor IX (but not to factor X) in the presence of calcium with a 1 to 1 stoichiometry.</text>
</comment>
<comment type="subunit">
    <text evidence="1">Heterodimer with subunit A of IX/X-bp or IX-bp; disulfide-linked.</text>
</comment>
<comment type="subcellular location">
    <subcellularLocation>
        <location evidence="1">Secreted</location>
    </subcellularLocation>
</comment>
<comment type="tissue specificity">
    <text>Expressed by the venom gland.</text>
</comment>
<comment type="miscellaneous">
    <text evidence="1">Calcium is required for ligand binding.</text>
</comment>
<comment type="similarity">
    <text evidence="3">Belongs to the snaclec family.</text>
</comment>
<name>SLB_GLOHA</name>
<evidence type="ECO:0000250" key="1"/>
<evidence type="ECO:0000255" key="2">
    <source>
        <dbReference type="PROSITE-ProRule" id="PRU00040"/>
    </source>
</evidence>
<evidence type="ECO:0000305" key="3"/>
<sequence length="146" mass="16841">MGRFIFLSFGLLVVFLSLSGTGADCPSGWSSYEGHCYKPFNEQKNWADAENFCTQQHTGGHLVSFHSTEEADFVVKLAFQNFGHGIFWMGLSNVWNQCSWQWSSAAKLKYEAWAEESYCVYFKSTNNKWRSRACRMEAYFVCEFQA</sequence>
<keyword id="KW-1203">Blood coagulation cascade inhibiting toxin</keyword>
<keyword id="KW-0106">Calcium</keyword>
<keyword id="KW-1015">Disulfide bond</keyword>
<keyword id="KW-1199">Hemostasis impairing toxin</keyword>
<keyword id="KW-0479">Metal-binding</keyword>
<keyword id="KW-0964">Secreted</keyword>
<keyword id="KW-0732">Signal</keyword>
<keyword id="KW-0800">Toxin</keyword>
<reference key="1">
    <citation type="submission" date="1999-10" db="EMBL/GenBank/DDBJ databases">
        <title>A novel coagulation factor Xa inhibitor from Korean snake (Agkistrodon halys) venom.</title>
        <authorList>
            <person name="Koo B.H."/>
            <person name="Sohn Y.D."/>
            <person name="Kim D.S."/>
            <person name="Jang Y.S."/>
            <person name="Chung K.H."/>
        </authorList>
    </citation>
    <scope>NUCLEOTIDE SEQUENCE [MRNA]</scope>
    <source>
        <tissue>Venom gland</tissue>
    </source>
</reference>
<reference key="2">
    <citation type="submission" date="2003-07" db="EMBL/GenBank/DDBJ databases">
        <title>Crystal structure of AHP IX-bp at pH 6.5 and 7.5 and implications for the pH-dependent mechanism of AHP IX-bp binding to coagulation factor IX.</title>
        <authorList>
            <person name="Zang J."/>
            <person name="Teng M."/>
            <person name="Niu L."/>
        </authorList>
    </citation>
    <scope>NUCLEOTIDE SEQUENCE [MRNA] OF 32-146</scope>
    <source>
        <tissue>Venom gland</tissue>
    </source>
</reference>
<organism>
    <name type="scientific">Gloydius halys</name>
    <name type="common">Chinese water mocassin</name>
    <name type="synonym">Agkistrodon halys</name>
    <dbReference type="NCBI Taxonomy" id="8714"/>
    <lineage>
        <taxon>Eukaryota</taxon>
        <taxon>Metazoa</taxon>
        <taxon>Chordata</taxon>
        <taxon>Craniata</taxon>
        <taxon>Vertebrata</taxon>
        <taxon>Euteleostomi</taxon>
        <taxon>Lepidosauria</taxon>
        <taxon>Squamata</taxon>
        <taxon>Bifurcata</taxon>
        <taxon>Unidentata</taxon>
        <taxon>Episquamata</taxon>
        <taxon>Toxicofera</taxon>
        <taxon>Serpentes</taxon>
        <taxon>Colubroidea</taxon>
        <taxon>Viperidae</taxon>
        <taxon>Crotalinae</taxon>
        <taxon>Gloydius</taxon>
    </lineage>
</organism>
<dbReference type="EMBL" id="AF197915">
    <property type="protein sequence ID" value="AAG28522.1"/>
    <property type="molecule type" value="mRNA"/>
</dbReference>
<dbReference type="EMBL" id="AY346128">
    <property type="protein sequence ID" value="AAQ24216.1"/>
    <property type="molecule type" value="mRNA"/>
</dbReference>
<dbReference type="SMR" id="Q9DG31"/>
<dbReference type="GO" id="GO:0005576">
    <property type="term" value="C:extracellular region"/>
    <property type="evidence" value="ECO:0007669"/>
    <property type="project" value="UniProtKB-SubCell"/>
</dbReference>
<dbReference type="GO" id="GO:0046872">
    <property type="term" value="F:metal ion binding"/>
    <property type="evidence" value="ECO:0007669"/>
    <property type="project" value="UniProtKB-KW"/>
</dbReference>
<dbReference type="GO" id="GO:0090729">
    <property type="term" value="F:toxin activity"/>
    <property type="evidence" value="ECO:0007669"/>
    <property type="project" value="UniProtKB-KW"/>
</dbReference>
<dbReference type="FunFam" id="3.10.100.10:FF:000087">
    <property type="entry name" value="Snaclec rhodocetin subunit delta"/>
    <property type="match status" value="1"/>
</dbReference>
<dbReference type="Gene3D" id="3.10.100.10">
    <property type="entry name" value="Mannose-Binding Protein A, subunit A"/>
    <property type="match status" value="1"/>
</dbReference>
<dbReference type="InterPro" id="IPR001304">
    <property type="entry name" value="C-type_lectin-like"/>
</dbReference>
<dbReference type="InterPro" id="IPR016186">
    <property type="entry name" value="C-type_lectin-like/link_sf"/>
</dbReference>
<dbReference type="InterPro" id="IPR050111">
    <property type="entry name" value="C-type_lectin/snaclec_domain"/>
</dbReference>
<dbReference type="InterPro" id="IPR018378">
    <property type="entry name" value="C-type_lectin_CS"/>
</dbReference>
<dbReference type="InterPro" id="IPR016187">
    <property type="entry name" value="CTDL_fold"/>
</dbReference>
<dbReference type="PANTHER" id="PTHR22803">
    <property type="entry name" value="MANNOSE, PHOSPHOLIPASE, LECTIN RECEPTOR RELATED"/>
    <property type="match status" value="1"/>
</dbReference>
<dbReference type="Pfam" id="PF00059">
    <property type="entry name" value="Lectin_C"/>
    <property type="match status" value="1"/>
</dbReference>
<dbReference type="PRINTS" id="PR01504">
    <property type="entry name" value="PNCREATITSAP"/>
</dbReference>
<dbReference type="SMART" id="SM00034">
    <property type="entry name" value="CLECT"/>
    <property type="match status" value="1"/>
</dbReference>
<dbReference type="SUPFAM" id="SSF56436">
    <property type="entry name" value="C-type lectin-like"/>
    <property type="match status" value="1"/>
</dbReference>
<dbReference type="PROSITE" id="PS00615">
    <property type="entry name" value="C_TYPE_LECTIN_1"/>
    <property type="match status" value="1"/>
</dbReference>
<dbReference type="PROSITE" id="PS50041">
    <property type="entry name" value="C_TYPE_LECTIN_2"/>
    <property type="match status" value="1"/>
</dbReference>
<feature type="signal peptide" evidence="1">
    <location>
        <begin position="1"/>
        <end position="23"/>
    </location>
</feature>
<feature type="chain" id="PRO_5000057261" description="Snaclec coagulation factor IX/factor X-binding protein subunit B">
    <location>
        <begin position="24"/>
        <end position="146"/>
    </location>
</feature>
<feature type="domain" description="C-type lectin" evidence="2">
    <location>
        <begin position="32"/>
        <end position="143"/>
    </location>
</feature>
<feature type="binding site" evidence="1">
    <location>
        <position position="64"/>
    </location>
    <ligand>
        <name>Ca(2+)</name>
        <dbReference type="ChEBI" id="CHEBI:29108"/>
    </ligand>
</feature>
<feature type="binding site" evidence="1">
    <location>
        <position position="70"/>
    </location>
    <ligand>
        <name>Ca(2+)</name>
        <dbReference type="ChEBI" id="CHEBI:29108"/>
    </ligand>
</feature>
<feature type="binding site" evidence="1">
    <location>
        <position position="143"/>
    </location>
    <ligand>
        <name>Ca(2+)</name>
        <dbReference type="ChEBI" id="CHEBI:29108"/>
    </ligand>
</feature>
<feature type="disulfide bond" evidence="2">
    <location>
        <begin position="25"/>
        <end position="36"/>
    </location>
</feature>
<feature type="disulfide bond" evidence="2">
    <location>
        <begin position="53"/>
        <end position="142"/>
    </location>
</feature>
<feature type="disulfide bond" description="Interchain (with C-102 in subunit A of IX/X-bp or with C-71 in subunit A of IX-bp)" evidence="2">
    <location>
        <position position="98"/>
    </location>
</feature>
<feature type="disulfide bond" evidence="2">
    <location>
        <begin position="119"/>
        <end position="134"/>
    </location>
</feature>
<feature type="sequence conflict" description="In Ref. 2; AAQ24216." evidence="3" ref="2">
    <original>Q</original>
    <variation>P</variation>
    <location>
        <position position="43"/>
    </location>
</feature>
<feature type="sequence conflict" description="In Ref. 2; AAQ24216." evidence="3" ref="2">
    <original>S</original>
    <variation>N</variation>
    <location>
        <position position="99"/>
    </location>
</feature>
<feature type="sequence conflict" description="In Ref. 2; AAQ24216." evidence="3" ref="2">
    <original>S</original>
    <variation>N</variation>
    <location>
        <position position="104"/>
    </location>
</feature>
<protein>
    <recommendedName>
        <fullName>Snaclec coagulation factor IX/factor X-binding protein subunit B</fullName>
        <shortName>IX/X-bp subunit B</shortName>
    </recommendedName>
    <alternativeName>
        <fullName>Halyxin subunit B</fullName>
    </alternativeName>
</protein>
<proteinExistence type="evidence at transcript level"/>